<keyword id="KW-0067">ATP-binding</keyword>
<keyword id="KW-0315">Glutamine amidotransferase</keyword>
<keyword id="KW-0332">GMP biosynthesis</keyword>
<keyword id="KW-0436">Ligase</keyword>
<keyword id="KW-0547">Nucleotide-binding</keyword>
<keyword id="KW-0658">Purine biosynthesis</keyword>
<keyword id="KW-1185">Reference proteome</keyword>
<sequence length="513" mass="57567">MSQQRDLIVVVDFGGQYSHLIARRVREAQVYCEIWPFTAPVQRYREAGVKGIIFSGGPASVEQADAPRIDPAIYELGIPILGICYGMQLMALQLGGEVRRGQQGEYGRATLRLADAEHPLLRGLGRESLVWMSHFDSVTRVPSGFRVLGATENTAVAVMGDDARRLYGVQFHPEVVHTAQGREILRNFLFNIAGCRGDWTTESFITRQVEEIRRQVGSGRVLCALSGGVDSSVAAVLVHKAVGDQLTCIFVDHGLMRKGEPEQVVRTFRDHFHIHLVHVDASERFLSKLRGVTDPEQKRKIIGNEFIRLFEDEARKLGQIDFLVQGTVYPDVIESGTETARVIKSHHNVGGLPEDMRFQLIEPFRQLFKDEVRAVGRALGVPEEIVGRHPFPGPGLGVRVLGEVTPEKLEILREADRIFVEEIRKAGLYDELWQAFTVLPDVRSVGVMGDERTYAYPVVLRAVTSEDAMTADFYRLPWDLLERIASRIVNEVPHVNRVVYDVTSKPPGTIEWE</sequence>
<accession>Q67S57</accession>
<protein>
    <recommendedName>
        <fullName evidence="1">GMP synthase [glutamine-hydrolyzing]</fullName>
        <ecNumber evidence="1">6.3.5.2</ecNumber>
    </recommendedName>
    <alternativeName>
        <fullName evidence="1">GMP synthetase</fullName>
    </alternativeName>
    <alternativeName>
        <fullName evidence="1">Glutamine amidotransferase</fullName>
    </alternativeName>
</protein>
<organism>
    <name type="scientific">Symbiobacterium thermophilum (strain DSM 24528 / JCM 14929 / IAM 14863 / T)</name>
    <dbReference type="NCBI Taxonomy" id="292459"/>
    <lineage>
        <taxon>Bacteria</taxon>
        <taxon>Bacillati</taxon>
        <taxon>Bacillota</taxon>
        <taxon>Clostridia</taxon>
        <taxon>Eubacteriales</taxon>
        <taxon>Symbiobacteriaceae</taxon>
        <taxon>Symbiobacterium</taxon>
    </lineage>
</organism>
<proteinExistence type="inferred from homology"/>
<name>GUAA_SYMTH</name>
<gene>
    <name evidence="1" type="primary">guaA</name>
    <name type="ordered locus">STH501</name>
</gene>
<dbReference type="EC" id="6.3.5.2" evidence="1"/>
<dbReference type="EMBL" id="AP006840">
    <property type="protein sequence ID" value="BAD39486.1"/>
    <property type="molecule type" value="Genomic_DNA"/>
</dbReference>
<dbReference type="RefSeq" id="WP_011194635.1">
    <property type="nucleotide sequence ID" value="NC_006177.1"/>
</dbReference>
<dbReference type="SMR" id="Q67S57"/>
<dbReference type="STRING" id="292459.STH501"/>
<dbReference type="MEROPS" id="C26.957"/>
<dbReference type="KEGG" id="sth:STH501"/>
<dbReference type="eggNOG" id="COG0518">
    <property type="taxonomic scope" value="Bacteria"/>
</dbReference>
<dbReference type="eggNOG" id="COG0519">
    <property type="taxonomic scope" value="Bacteria"/>
</dbReference>
<dbReference type="HOGENOM" id="CLU_014340_0_5_9"/>
<dbReference type="OrthoDB" id="9802219at2"/>
<dbReference type="UniPathway" id="UPA00189">
    <property type="reaction ID" value="UER00296"/>
</dbReference>
<dbReference type="Proteomes" id="UP000000417">
    <property type="component" value="Chromosome"/>
</dbReference>
<dbReference type="GO" id="GO:0005829">
    <property type="term" value="C:cytosol"/>
    <property type="evidence" value="ECO:0007669"/>
    <property type="project" value="TreeGrafter"/>
</dbReference>
<dbReference type="GO" id="GO:0005524">
    <property type="term" value="F:ATP binding"/>
    <property type="evidence" value="ECO:0007669"/>
    <property type="project" value="UniProtKB-UniRule"/>
</dbReference>
<dbReference type="GO" id="GO:0003921">
    <property type="term" value="F:GMP synthase activity"/>
    <property type="evidence" value="ECO:0007669"/>
    <property type="project" value="InterPro"/>
</dbReference>
<dbReference type="CDD" id="cd01742">
    <property type="entry name" value="GATase1_GMP_Synthase"/>
    <property type="match status" value="1"/>
</dbReference>
<dbReference type="CDD" id="cd01997">
    <property type="entry name" value="GMP_synthase_C"/>
    <property type="match status" value="1"/>
</dbReference>
<dbReference type="FunFam" id="3.30.300.10:FF:000002">
    <property type="entry name" value="GMP synthase [glutamine-hydrolyzing]"/>
    <property type="match status" value="1"/>
</dbReference>
<dbReference type="FunFam" id="3.40.50.620:FF:000001">
    <property type="entry name" value="GMP synthase [glutamine-hydrolyzing]"/>
    <property type="match status" value="1"/>
</dbReference>
<dbReference type="FunFam" id="3.40.50.880:FF:000001">
    <property type="entry name" value="GMP synthase [glutamine-hydrolyzing]"/>
    <property type="match status" value="1"/>
</dbReference>
<dbReference type="Gene3D" id="3.30.300.10">
    <property type="match status" value="1"/>
</dbReference>
<dbReference type="Gene3D" id="3.40.50.880">
    <property type="match status" value="1"/>
</dbReference>
<dbReference type="Gene3D" id="3.40.50.620">
    <property type="entry name" value="HUPs"/>
    <property type="match status" value="1"/>
</dbReference>
<dbReference type="HAMAP" id="MF_00344">
    <property type="entry name" value="GMP_synthase"/>
    <property type="match status" value="1"/>
</dbReference>
<dbReference type="InterPro" id="IPR029062">
    <property type="entry name" value="Class_I_gatase-like"/>
</dbReference>
<dbReference type="InterPro" id="IPR017926">
    <property type="entry name" value="GATASE"/>
</dbReference>
<dbReference type="InterPro" id="IPR001674">
    <property type="entry name" value="GMP_synth_C"/>
</dbReference>
<dbReference type="InterPro" id="IPR004739">
    <property type="entry name" value="GMP_synth_GATase"/>
</dbReference>
<dbReference type="InterPro" id="IPR022955">
    <property type="entry name" value="GMP_synthase"/>
</dbReference>
<dbReference type="InterPro" id="IPR025777">
    <property type="entry name" value="GMPS_ATP_PPase_dom"/>
</dbReference>
<dbReference type="InterPro" id="IPR014729">
    <property type="entry name" value="Rossmann-like_a/b/a_fold"/>
</dbReference>
<dbReference type="NCBIfam" id="TIGR00884">
    <property type="entry name" value="guaA_Cterm"/>
    <property type="match status" value="1"/>
</dbReference>
<dbReference type="NCBIfam" id="TIGR00888">
    <property type="entry name" value="guaA_Nterm"/>
    <property type="match status" value="1"/>
</dbReference>
<dbReference type="NCBIfam" id="NF000848">
    <property type="entry name" value="PRK00074.1"/>
    <property type="match status" value="1"/>
</dbReference>
<dbReference type="PANTHER" id="PTHR11922:SF2">
    <property type="entry name" value="GMP SYNTHASE [GLUTAMINE-HYDROLYZING]"/>
    <property type="match status" value="1"/>
</dbReference>
<dbReference type="PANTHER" id="PTHR11922">
    <property type="entry name" value="GMP SYNTHASE-RELATED"/>
    <property type="match status" value="1"/>
</dbReference>
<dbReference type="Pfam" id="PF00117">
    <property type="entry name" value="GATase"/>
    <property type="match status" value="1"/>
</dbReference>
<dbReference type="Pfam" id="PF00958">
    <property type="entry name" value="GMP_synt_C"/>
    <property type="match status" value="1"/>
</dbReference>
<dbReference type="Pfam" id="PF03054">
    <property type="entry name" value="tRNA_Me_trans"/>
    <property type="match status" value="1"/>
</dbReference>
<dbReference type="PRINTS" id="PR00097">
    <property type="entry name" value="ANTSNTHASEII"/>
</dbReference>
<dbReference type="PRINTS" id="PR00099">
    <property type="entry name" value="CPSGATASE"/>
</dbReference>
<dbReference type="PRINTS" id="PR00096">
    <property type="entry name" value="GATASE"/>
</dbReference>
<dbReference type="SUPFAM" id="SSF52402">
    <property type="entry name" value="Adenine nucleotide alpha hydrolases-like"/>
    <property type="match status" value="1"/>
</dbReference>
<dbReference type="SUPFAM" id="SSF52317">
    <property type="entry name" value="Class I glutamine amidotransferase-like"/>
    <property type="match status" value="1"/>
</dbReference>
<dbReference type="SUPFAM" id="SSF54810">
    <property type="entry name" value="GMP synthetase C-terminal dimerisation domain"/>
    <property type="match status" value="1"/>
</dbReference>
<dbReference type="PROSITE" id="PS51273">
    <property type="entry name" value="GATASE_TYPE_1"/>
    <property type="match status" value="1"/>
</dbReference>
<dbReference type="PROSITE" id="PS51553">
    <property type="entry name" value="GMPS_ATP_PPASE"/>
    <property type="match status" value="1"/>
</dbReference>
<evidence type="ECO:0000255" key="1">
    <source>
        <dbReference type="HAMAP-Rule" id="MF_00344"/>
    </source>
</evidence>
<feature type="chain" id="PRO_0000229478" description="GMP synthase [glutamine-hydrolyzing]">
    <location>
        <begin position="1"/>
        <end position="513"/>
    </location>
</feature>
<feature type="domain" description="Glutamine amidotransferase type-1" evidence="1">
    <location>
        <begin position="7"/>
        <end position="198"/>
    </location>
</feature>
<feature type="domain" description="GMPS ATP-PPase" evidence="1">
    <location>
        <begin position="199"/>
        <end position="388"/>
    </location>
</feature>
<feature type="active site" description="Nucleophile" evidence="1">
    <location>
        <position position="84"/>
    </location>
</feature>
<feature type="active site" evidence="1">
    <location>
        <position position="172"/>
    </location>
</feature>
<feature type="active site" evidence="1">
    <location>
        <position position="174"/>
    </location>
</feature>
<feature type="binding site" evidence="1">
    <location>
        <begin position="226"/>
        <end position="232"/>
    </location>
    <ligand>
        <name>ATP</name>
        <dbReference type="ChEBI" id="CHEBI:30616"/>
    </ligand>
</feature>
<reference key="1">
    <citation type="journal article" date="2004" name="Nucleic Acids Res.">
        <title>Genome sequence of Symbiobacterium thermophilum, an uncultivable bacterium that depends on microbial commensalism.</title>
        <authorList>
            <person name="Ueda K."/>
            <person name="Yamashita A."/>
            <person name="Ishikawa J."/>
            <person name="Shimada M."/>
            <person name="Watsuji T."/>
            <person name="Morimura K."/>
            <person name="Ikeda H."/>
            <person name="Hattori M."/>
            <person name="Beppu T."/>
        </authorList>
    </citation>
    <scope>NUCLEOTIDE SEQUENCE [LARGE SCALE GENOMIC DNA]</scope>
    <source>
        <strain>DSM 24528 / JCM 14929 / IAM 14863 / T</strain>
    </source>
</reference>
<comment type="function">
    <text evidence="1">Catalyzes the synthesis of GMP from XMP.</text>
</comment>
<comment type="catalytic activity">
    <reaction evidence="1">
        <text>XMP + L-glutamine + ATP + H2O = GMP + L-glutamate + AMP + diphosphate + 2 H(+)</text>
        <dbReference type="Rhea" id="RHEA:11680"/>
        <dbReference type="ChEBI" id="CHEBI:15377"/>
        <dbReference type="ChEBI" id="CHEBI:15378"/>
        <dbReference type="ChEBI" id="CHEBI:29985"/>
        <dbReference type="ChEBI" id="CHEBI:30616"/>
        <dbReference type="ChEBI" id="CHEBI:33019"/>
        <dbReference type="ChEBI" id="CHEBI:57464"/>
        <dbReference type="ChEBI" id="CHEBI:58115"/>
        <dbReference type="ChEBI" id="CHEBI:58359"/>
        <dbReference type="ChEBI" id="CHEBI:456215"/>
        <dbReference type="EC" id="6.3.5.2"/>
    </reaction>
</comment>
<comment type="pathway">
    <text evidence="1">Purine metabolism; GMP biosynthesis; GMP from XMP (L-Gln route): step 1/1.</text>
</comment>
<comment type="subunit">
    <text evidence="1">Homodimer.</text>
</comment>